<evidence type="ECO:0000255" key="1">
    <source>
        <dbReference type="HAMAP-Rule" id="MF_01347"/>
    </source>
</evidence>
<name>ATPB_LEGPA</name>
<dbReference type="EC" id="7.1.2.2" evidence="1"/>
<dbReference type="EMBL" id="CR628336">
    <property type="protein sequence ID" value="CAH14206.1"/>
    <property type="molecule type" value="Genomic_DNA"/>
</dbReference>
<dbReference type="RefSeq" id="WP_010948666.1">
    <property type="nucleotide sequence ID" value="NC_006368.1"/>
</dbReference>
<dbReference type="SMR" id="Q5X0P3"/>
<dbReference type="GeneID" id="57036988"/>
<dbReference type="KEGG" id="lpp:lpp3053"/>
<dbReference type="LegioList" id="lpp3053"/>
<dbReference type="HOGENOM" id="CLU_022398_0_2_6"/>
<dbReference type="GO" id="GO:0005886">
    <property type="term" value="C:plasma membrane"/>
    <property type="evidence" value="ECO:0007669"/>
    <property type="project" value="UniProtKB-SubCell"/>
</dbReference>
<dbReference type="GO" id="GO:0045259">
    <property type="term" value="C:proton-transporting ATP synthase complex"/>
    <property type="evidence" value="ECO:0007669"/>
    <property type="project" value="UniProtKB-KW"/>
</dbReference>
<dbReference type="GO" id="GO:0005524">
    <property type="term" value="F:ATP binding"/>
    <property type="evidence" value="ECO:0007669"/>
    <property type="project" value="UniProtKB-UniRule"/>
</dbReference>
<dbReference type="GO" id="GO:0016887">
    <property type="term" value="F:ATP hydrolysis activity"/>
    <property type="evidence" value="ECO:0007669"/>
    <property type="project" value="InterPro"/>
</dbReference>
<dbReference type="GO" id="GO:0046933">
    <property type="term" value="F:proton-transporting ATP synthase activity, rotational mechanism"/>
    <property type="evidence" value="ECO:0007669"/>
    <property type="project" value="UniProtKB-UniRule"/>
</dbReference>
<dbReference type="CDD" id="cd18110">
    <property type="entry name" value="ATP-synt_F1_beta_C"/>
    <property type="match status" value="1"/>
</dbReference>
<dbReference type="CDD" id="cd18115">
    <property type="entry name" value="ATP-synt_F1_beta_N"/>
    <property type="match status" value="1"/>
</dbReference>
<dbReference type="CDD" id="cd01133">
    <property type="entry name" value="F1-ATPase_beta_CD"/>
    <property type="match status" value="1"/>
</dbReference>
<dbReference type="FunFam" id="1.10.1140.10:FF:000001">
    <property type="entry name" value="ATP synthase subunit beta"/>
    <property type="match status" value="1"/>
</dbReference>
<dbReference type="FunFam" id="3.40.50.300:FF:000004">
    <property type="entry name" value="ATP synthase subunit beta"/>
    <property type="match status" value="1"/>
</dbReference>
<dbReference type="Gene3D" id="2.40.10.170">
    <property type="match status" value="1"/>
</dbReference>
<dbReference type="Gene3D" id="1.10.1140.10">
    <property type="entry name" value="Bovine Mitochondrial F1-atpase, Atp Synthase Beta Chain, Chain D, domain 3"/>
    <property type="match status" value="1"/>
</dbReference>
<dbReference type="Gene3D" id="3.40.50.300">
    <property type="entry name" value="P-loop containing nucleotide triphosphate hydrolases"/>
    <property type="match status" value="1"/>
</dbReference>
<dbReference type="HAMAP" id="MF_01347">
    <property type="entry name" value="ATP_synth_beta_bact"/>
    <property type="match status" value="1"/>
</dbReference>
<dbReference type="InterPro" id="IPR003593">
    <property type="entry name" value="AAA+_ATPase"/>
</dbReference>
<dbReference type="InterPro" id="IPR055190">
    <property type="entry name" value="ATP-synt_VA_C"/>
</dbReference>
<dbReference type="InterPro" id="IPR005722">
    <property type="entry name" value="ATP_synth_F1_bsu"/>
</dbReference>
<dbReference type="InterPro" id="IPR020003">
    <property type="entry name" value="ATPase_a/bsu_AS"/>
</dbReference>
<dbReference type="InterPro" id="IPR050053">
    <property type="entry name" value="ATPase_alpha/beta_chains"/>
</dbReference>
<dbReference type="InterPro" id="IPR004100">
    <property type="entry name" value="ATPase_F1/V1/A1_a/bsu_N"/>
</dbReference>
<dbReference type="InterPro" id="IPR036121">
    <property type="entry name" value="ATPase_F1/V1/A1_a/bsu_N_sf"/>
</dbReference>
<dbReference type="InterPro" id="IPR000194">
    <property type="entry name" value="ATPase_F1/V1/A1_a/bsu_nucl-bd"/>
</dbReference>
<dbReference type="InterPro" id="IPR024034">
    <property type="entry name" value="ATPase_F1/V1_b/a_C"/>
</dbReference>
<dbReference type="InterPro" id="IPR027417">
    <property type="entry name" value="P-loop_NTPase"/>
</dbReference>
<dbReference type="NCBIfam" id="TIGR01039">
    <property type="entry name" value="atpD"/>
    <property type="match status" value="1"/>
</dbReference>
<dbReference type="PANTHER" id="PTHR15184">
    <property type="entry name" value="ATP SYNTHASE"/>
    <property type="match status" value="1"/>
</dbReference>
<dbReference type="PANTHER" id="PTHR15184:SF71">
    <property type="entry name" value="ATP SYNTHASE SUBUNIT BETA, MITOCHONDRIAL"/>
    <property type="match status" value="1"/>
</dbReference>
<dbReference type="Pfam" id="PF00006">
    <property type="entry name" value="ATP-synt_ab"/>
    <property type="match status" value="1"/>
</dbReference>
<dbReference type="Pfam" id="PF02874">
    <property type="entry name" value="ATP-synt_ab_N"/>
    <property type="match status" value="1"/>
</dbReference>
<dbReference type="Pfam" id="PF22919">
    <property type="entry name" value="ATP-synt_VA_C"/>
    <property type="match status" value="1"/>
</dbReference>
<dbReference type="SMART" id="SM00382">
    <property type="entry name" value="AAA"/>
    <property type="match status" value="1"/>
</dbReference>
<dbReference type="SUPFAM" id="SSF47917">
    <property type="entry name" value="C-terminal domain of alpha and beta subunits of F1 ATP synthase"/>
    <property type="match status" value="1"/>
</dbReference>
<dbReference type="SUPFAM" id="SSF50615">
    <property type="entry name" value="N-terminal domain of alpha and beta subunits of F1 ATP synthase"/>
    <property type="match status" value="1"/>
</dbReference>
<dbReference type="SUPFAM" id="SSF52540">
    <property type="entry name" value="P-loop containing nucleoside triphosphate hydrolases"/>
    <property type="match status" value="1"/>
</dbReference>
<dbReference type="PROSITE" id="PS00152">
    <property type="entry name" value="ATPASE_ALPHA_BETA"/>
    <property type="match status" value="1"/>
</dbReference>
<feature type="chain" id="PRO_0000254286" description="ATP synthase subunit beta">
    <location>
        <begin position="1"/>
        <end position="458"/>
    </location>
</feature>
<feature type="binding site" evidence="1">
    <location>
        <begin position="148"/>
        <end position="155"/>
    </location>
    <ligand>
        <name>ATP</name>
        <dbReference type="ChEBI" id="CHEBI:30616"/>
    </ligand>
</feature>
<organism>
    <name type="scientific">Legionella pneumophila (strain Paris)</name>
    <dbReference type="NCBI Taxonomy" id="297246"/>
    <lineage>
        <taxon>Bacteria</taxon>
        <taxon>Pseudomonadati</taxon>
        <taxon>Pseudomonadota</taxon>
        <taxon>Gammaproteobacteria</taxon>
        <taxon>Legionellales</taxon>
        <taxon>Legionellaceae</taxon>
        <taxon>Legionella</taxon>
    </lineage>
</organism>
<sequence length="458" mass="50026">MSLGTVVEVIGAVVDVEFPRDSVPKVNDALKLVDSDLVFEVQQQLGDGVVRTIAMGTTDGLKRGLKAENTGHPIQVPVGKKTLGRIMDVLGRPVDDAGPIDAEETWAIHRKAPSYEEQAGSQELLETGIKVIDLLCPFAKGGKVGLFGGAGVGKTVNMMELIRNIAIEHSGYSVFAGVGERTREGNDFYHEMKDSNVLDKVSLVYGQMNEPPGNRLRVALTGLTMAEKFRDEGRDVLLFIDNIYRYTLAGVEVSALLGRMPSAVGYQPTLAEEMGMLQERITSTKTGSITSIQAVYVPADDLTDPSPATTFAHLDATVVLSRQIAELGIYPAVDPLDSTSRQLDPLIVGQEHYDTARRVQQTLQRYKELKDIIAILGMDELSEEDKRVVTRARKIQRFLSQPFFVAEVFTGSPGKYVSLKDTIKGFQGILAGEYDDLPEQAFYMVGSIEEAVAKAKTL</sequence>
<proteinExistence type="inferred from homology"/>
<reference key="1">
    <citation type="journal article" date="2004" name="Nat. Genet.">
        <title>Evidence in the Legionella pneumophila genome for exploitation of host cell functions and high genome plasticity.</title>
        <authorList>
            <person name="Cazalet C."/>
            <person name="Rusniok C."/>
            <person name="Brueggemann H."/>
            <person name="Zidane N."/>
            <person name="Magnier A."/>
            <person name="Ma L."/>
            <person name="Tichit M."/>
            <person name="Jarraud S."/>
            <person name="Bouchier C."/>
            <person name="Vandenesch F."/>
            <person name="Kunst F."/>
            <person name="Etienne J."/>
            <person name="Glaser P."/>
            <person name="Buchrieser C."/>
        </authorList>
    </citation>
    <scope>NUCLEOTIDE SEQUENCE [LARGE SCALE GENOMIC DNA]</scope>
    <source>
        <strain>Paris</strain>
    </source>
</reference>
<accession>Q5X0P3</accession>
<comment type="function">
    <text evidence="1">Produces ATP from ADP in the presence of a proton gradient across the membrane. The catalytic sites are hosted primarily by the beta subunits.</text>
</comment>
<comment type="catalytic activity">
    <reaction evidence="1">
        <text>ATP + H2O + 4 H(+)(in) = ADP + phosphate + 5 H(+)(out)</text>
        <dbReference type="Rhea" id="RHEA:57720"/>
        <dbReference type="ChEBI" id="CHEBI:15377"/>
        <dbReference type="ChEBI" id="CHEBI:15378"/>
        <dbReference type="ChEBI" id="CHEBI:30616"/>
        <dbReference type="ChEBI" id="CHEBI:43474"/>
        <dbReference type="ChEBI" id="CHEBI:456216"/>
        <dbReference type="EC" id="7.1.2.2"/>
    </reaction>
</comment>
<comment type="subunit">
    <text evidence="1">F-type ATPases have 2 components, CF(1) - the catalytic core - and CF(0) - the membrane proton channel. CF(1) has five subunits: alpha(3), beta(3), gamma(1), delta(1), epsilon(1). CF(0) has three main subunits: a(1), b(2) and c(9-12). The alpha and beta chains form an alternating ring which encloses part of the gamma chain. CF(1) is attached to CF(0) by a central stalk formed by the gamma and epsilon chains, while a peripheral stalk is formed by the delta and b chains.</text>
</comment>
<comment type="subcellular location">
    <subcellularLocation>
        <location evidence="1">Cell inner membrane</location>
        <topology evidence="1">Peripheral membrane protein</topology>
    </subcellularLocation>
</comment>
<comment type="similarity">
    <text evidence="1">Belongs to the ATPase alpha/beta chains family.</text>
</comment>
<protein>
    <recommendedName>
        <fullName evidence="1">ATP synthase subunit beta</fullName>
        <ecNumber evidence="1">7.1.2.2</ecNumber>
    </recommendedName>
    <alternativeName>
        <fullName evidence="1">ATP synthase F1 sector subunit beta</fullName>
    </alternativeName>
    <alternativeName>
        <fullName evidence="1">F-ATPase subunit beta</fullName>
    </alternativeName>
</protein>
<gene>
    <name evidence="1" type="primary">atpD</name>
    <name type="ordered locus">lpp3053</name>
</gene>
<keyword id="KW-0066">ATP synthesis</keyword>
<keyword id="KW-0067">ATP-binding</keyword>
<keyword id="KW-0997">Cell inner membrane</keyword>
<keyword id="KW-1003">Cell membrane</keyword>
<keyword id="KW-0139">CF(1)</keyword>
<keyword id="KW-0375">Hydrogen ion transport</keyword>
<keyword id="KW-0406">Ion transport</keyword>
<keyword id="KW-0472">Membrane</keyword>
<keyword id="KW-0547">Nucleotide-binding</keyword>
<keyword id="KW-1278">Translocase</keyword>
<keyword id="KW-0813">Transport</keyword>